<name>CHED_SACD2</name>
<comment type="function">
    <text evidence="1">Probably deamidates glutamine residues to glutamate on methyl-accepting chemotaxis receptors (MCPs), playing an important role in chemotaxis.</text>
</comment>
<comment type="catalytic activity">
    <reaction evidence="1">
        <text>L-glutaminyl-[protein] + H2O = L-glutamyl-[protein] + NH4(+)</text>
        <dbReference type="Rhea" id="RHEA:16441"/>
        <dbReference type="Rhea" id="RHEA-COMP:10207"/>
        <dbReference type="Rhea" id="RHEA-COMP:10208"/>
        <dbReference type="ChEBI" id="CHEBI:15377"/>
        <dbReference type="ChEBI" id="CHEBI:28938"/>
        <dbReference type="ChEBI" id="CHEBI:29973"/>
        <dbReference type="ChEBI" id="CHEBI:30011"/>
        <dbReference type="EC" id="3.5.1.44"/>
    </reaction>
</comment>
<comment type="similarity">
    <text evidence="1">Belongs to the CheD family.</text>
</comment>
<dbReference type="EC" id="3.5.1.44" evidence="1"/>
<dbReference type="EMBL" id="CP000282">
    <property type="protein sequence ID" value="ABD82360.1"/>
    <property type="molecule type" value="Genomic_DNA"/>
</dbReference>
<dbReference type="RefSeq" id="WP_011469576.1">
    <property type="nucleotide sequence ID" value="NC_007912.1"/>
</dbReference>
<dbReference type="SMR" id="Q21G19"/>
<dbReference type="STRING" id="203122.Sde_3103"/>
<dbReference type="GeneID" id="98614736"/>
<dbReference type="KEGG" id="sde:Sde_3103"/>
<dbReference type="eggNOG" id="COG1871">
    <property type="taxonomic scope" value="Bacteria"/>
</dbReference>
<dbReference type="HOGENOM" id="CLU_087854_0_0_6"/>
<dbReference type="OrthoDB" id="9807202at2"/>
<dbReference type="Proteomes" id="UP000001947">
    <property type="component" value="Chromosome"/>
</dbReference>
<dbReference type="GO" id="GO:0050568">
    <property type="term" value="F:protein-glutamine glutaminase activity"/>
    <property type="evidence" value="ECO:0007669"/>
    <property type="project" value="UniProtKB-UniRule"/>
</dbReference>
<dbReference type="GO" id="GO:0006935">
    <property type="term" value="P:chemotaxis"/>
    <property type="evidence" value="ECO:0007669"/>
    <property type="project" value="UniProtKB-UniRule"/>
</dbReference>
<dbReference type="CDD" id="cd16352">
    <property type="entry name" value="CheD"/>
    <property type="match status" value="1"/>
</dbReference>
<dbReference type="Gene3D" id="3.30.1330.200">
    <property type="match status" value="1"/>
</dbReference>
<dbReference type="HAMAP" id="MF_01440">
    <property type="entry name" value="CheD"/>
    <property type="match status" value="1"/>
</dbReference>
<dbReference type="InterPro" id="IPR038592">
    <property type="entry name" value="CheD-like_sf"/>
</dbReference>
<dbReference type="InterPro" id="IPR005659">
    <property type="entry name" value="Chemorcpt_Glu_NH3ase_CheD"/>
</dbReference>
<dbReference type="InterPro" id="IPR011324">
    <property type="entry name" value="Cytotoxic_necrot_fac-like_cat"/>
</dbReference>
<dbReference type="NCBIfam" id="NF010013">
    <property type="entry name" value="PRK13487.1"/>
    <property type="match status" value="1"/>
</dbReference>
<dbReference type="PANTHER" id="PTHR35147">
    <property type="entry name" value="CHEMORECEPTOR GLUTAMINE DEAMIDASE CHED-RELATED"/>
    <property type="match status" value="1"/>
</dbReference>
<dbReference type="PANTHER" id="PTHR35147:SF2">
    <property type="entry name" value="CHEMORECEPTOR GLUTAMINE DEAMIDASE CHED-RELATED"/>
    <property type="match status" value="1"/>
</dbReference>
<dbReference type="Pfam" id="PF03975">
    <property type="entry name" value="CheD"/>
    <property type="match status" value="1"/>
</dbReference>
<dbReference type="SUPFAM" id="SSF64438">
    <property type="entry name" value="CNF1/YfiH-like putative cysteine hydrolases"/>
    <property type="match status" value="1"/>
</dbReference>
<proteinExistence type="inferred from homology"/>
<evidence type="ECO:0000255" key="1">
    <source>
        <dbReference type="HAMAP-Rule" id="MF_01440"/>
    </source>
</evidence>
<sequence length="218" mass="23949">MLKGLTSKADARLKPALPGFTNVYRYWDARFAKVAVKLQPGECYVTKNDEMLVTVLGSCIAACIRDPVAGVGGMNHFMLPEQAAGHEITRNSLSNPELCYGNWAMEHLINSIIKCGGMRNRLEIKLFGGGRVLANMVRMDIGQRNIEFVESFLANDELPVIAKDLGGNYPRKILYFAATGQAKMKKMGIASDTNLVKQEKAYLDSLATKPSAGDVELF</sequence>
<keyword id="KW-0145">Chemotaxis</keyword>
<keyword id="KW-0378">Hydrolase</keyword>
<keyword id="KW-1185">Reference proteome</keyword>
<feature type="chain" id="PRO_0000251063" description="Probable chemoreceptor glutamine deamidase CheD">
    <location>
        <begin position="1"/>
        <end position="218"/>
    </location>
</feature>
<protein>
    <recommendedName>
        <fullName evidence="1">Probable chemoreceptor glutamine deamidase CheD</fullName>
        <ecNumber evidence="1">3.5.1.44</ecNumber>
    </recommendedName>
</protein>
<organism>
    <name type="scientific">Saccharophagus degradans (strain 2-40 / ATCC 43961 / DSM 17024)</name>
    <dbReference type="NCBI Taxonomy" id="203122"/>
    <lineage>
        <taxon>Bacteria</taxon>
        <taxon>Pseudomonadati</taxon>
        <taxon>Pseudomonadota</taxon>
        <taxon>Gammaproteobacteria</taxon>
        <taxon>Cellvibrionales</taxon>
        <taxon>Cellvibrionaceae</taxon>
        <taxon>Saccharophagus</taxon>
    </lineage>
</organism>
<reference key="1">
    <citation type="journal article" date="2008" name="PLoS Genet.">
        <title>Complete genome sequence of the complex carbohydrate-degrading marine bacterium, Saccharophagus degradans strain 2-40 T.</title>
        <authorList>
            <person name="Weiner R.M."/>
            <person name="Taylor L.E. II"/>
            <person name="Henrissat B."/>
            <person name="Hauser L."/>
            <person name="Land M."/>
            <person name="Coutinho P.M."/>
            <person name="Rancurel C."/>
            <person name="Saunders E.H."/>
            <person name="Longmire A.G."/>
            <person name="Zhang H."/>
            <person name="Bayer E.A."/>
            <person name="Gilbert H.J."/>
            <person name="Larimer F."/>
            <person name="Zhulin I.B."/>
            <person name="Ekborg N.A."/>
            <person name="Lamed R."/>
            <person name="Richardson P.M."/>
            <person name="Borovok I."/>
            <person name="Hutcheson S."/>
        </authorList>
    </citation>
    <scope>NUCLEOTIDE SEQUENCE [LARGE SCALE GENOMIC DNA]</scope>
    <source>
        <strain>2-40 / ATCC 43961 / DSM 17024</strain>
    </source>
</reference>
<accession>Q21G19</accession>
<gene>
    <name evidence="1" type="primary">cheD</name>
    <name type="ordered locus">Sde_3103</name>
</gene>